<keyword id="KW-0066">ATP synthesis</keyword>
<keyword id="KW-0067">ATP-binding</keyword>
<keyword id="KW-0997">Cell inner membrane</keyword>
<keyword id="KW-1003">Cell membrane</keyword>
<keyword id="KW-0139">CF(1)</keyword>
<keyword id="KW-0375">Hydrogen ion transport</keyword>
<keyword id="KW-0406">Ion transport</keyword>
<keyword id="KW-0472">Membrane</keyword>
<keyword id="KW-0547">Nucleotide-binding</keyword>
<keyword id="KW-1185">Reference proteome</keyword>
<keyword id="KW-1278">Translocase</keyword>
<keyword id="KW-0813">Transport</keyword>
<proteinExistence type="inferred from homology"/>
<feature type="chain" id="PRO_1000214812" description="ATP synthase subunit alpha">
    <location>
        <begin position="1"/>
        <end position="502"/>
    </location>
</feature>
<feature type="binding site" evidence="1">
    <location>
        <begin position="169"/>
        <end position="176"/>
    </location>
    <ligand>
        <name>ATP</name>
        <dbReference type="ChEBI" id="CHEBI:30616"/>
    </ligand>
</feature>
<feature type="site" description="Required for activity" evidence="1">
    <location>
        <position position="362"/>
    </location>
</feature>
<evidence type="ECO:0000255" key="1">
    <source>
        <dbReference type="HAMAP-Rule" id="MF_01346"/>
    </source>
</evidence>
<comment type="function">
    <text evidence="1">Produces ATP from ADP in the presence of a proton gradient across the membrane. The alpha chain is a regulatory subunit.</text>
</comment>
<comment type="catalytic activity">
    <reaction evidence="1">
        <text>ATP + H2O + 4 H(+)(in) = ADP + phosphate + 5 H(+)(out)</text>
        <dbReference type="Rhea" id="RHEA:57720"/>
        <dbReference type="ChEBI" id="CHEBI:15377"/>
        <dbReference type="ChEBI" id="CHEBI:15378"/>
        <dbReference type="ChEBI" id="CHEBI:30616"/>
        <dbReference type="ChEBI" id="CHEBI:43474"/>
        <dbReference type="ChEBI" id="CHEBI:456216"/>
        <dbReference type="EC" id="7.1.2.2"/>
    </reaction>
</comment>
<comment type="subunit">
    <text evidence="1">F-type ATPases have 2 components, CF(1) - the catalytic core - and CF(0) - the membrane proton channel. CF(1) has five subunits: alpha(3), beta(3), gamma(1), delta(1), epsilon(1). CF(0) has three main subunits: a(1), b(2) and c(9-12). The alpha and beta chains form an alternating ring which encloses part of the gamma chain. CF(1) is attached to CF(0) by a central stalk formed by the gamma and epsilon chains, while a peripheral stalk is formed by the delta and b chains.</text>
</comment>
<comment type="subcellular location">
    <subcellularLocation>
        <location evidence="1">Cell inner membrane</location>
        <topology evidence="1">Peripheral membrane protein</topology>
    </subcellularLocation>
</comment>
<comment type="similarity">
    <text evidence="1">Belongs to the ATPase alpha/beta chains family.</text>
</comment>
<organism>
    <name type="scientific">Kosmotoga olearia (strain ATCC BAA-1733 / DSM 21960 / TBF 19.5.1)</name>
    <dbReference type="NCBI Taxonomy" id="521045"/>
    <lineage>
        <taxon>Bacteria</taxon>
        <taxon>Thermotogati</taxon>
        <taxon>Thermotogota</taxon>
        <taxon>Thermotogae</taxon>
        <taxon>Kosmotogales</taxon>
        <taxon>Kosmotogaceae</taxon>
        <taxon>Kosmotoga</taxon>
    </lineage>
</organism>
<reference key="1">
    <citation type="submission" date="2009-06" db="EMBL/GenBank/DDBJ databases">
        <title>Complete sequence of Thermotogales bacterium TBF 19.5.1.</title>
        <authorList>
            <consortium name="US DOE Joint Genome Institute"/>
            <person name="Lucas S."/>
            <person name="Copeland A."/>
            <person name="Lapidus A."/>
            <person name="Glavina del Rio T."/>
            <person name="Tice H."/>
            <person name="Bruce D."/>
            <person name="Goodwin L."/>
            <person name="Pitluck S."/>
            <person name="Chertkov O."/>
            <person name="Brettin T."/>
            <person name="Detter J.C."/>
            <person name="Han C."/>
            <person name="Schmutz J."/>
            <person name="Larimer F."/>
            <person name="Land M."/>
            <person name="Hauser L."/>
            <person name="Kyrpides N."/>
            <person name="Ovchinnikova G."/>
            <person name="Noll K."/>
        </authorList>
    </citation>
    <scope>NUCLEOTIDE SEQUENCE [LARGE SCALE GENOMIC DNA]</scope>
    <source>
        <strain>ATCC BAA-1733 / DSM 21960 / TBF 19.5.1</strain>
    </source>
</reference>
<name>ATPA_KOSOT</name>
<sequence>MKISPSEITKIIEEQLKRSDREIDYFEAGRIIQVGDGIARAYGLKGVMSNELVQFENGEYGLALNLEEDNVGIVVLGDYREIKEGDLVKRTGRIIEVPAGEALLGRVVNPLGIPLDGKGPIEASEHRPVEIKAPGVVMRKPVDTPLQTGIKAIDAMIPIGRGQRELIIGDRQTGKTAIAIDTIINQKDQGVYCIYVAIGQKTAVLARIIDKLEETGAMEYTTIVAATANDPATLAYLAPYAGAAMGEYFMYSGKDALVIYDDLSKHAAAYRELSLLLRRPPGREAYPGDVFYLHSRLLERAARLNEEHGGGSLTALPIIETLANDVSAYIPTNVISITDGQIYLDPNLFYAGNRPAINVGLSVSRVGGSAQIKAMKKIAGSLRLDLAQYRELLAFAQFSTELDKATQAQLIRGEKLTELLKQEQYSPMPVEEQIAVLYAGTRGYLDDLPTDKIRQFEKQLLQTMRQKYADVLKAIREKKDMTEEIEAGLKKAVEDVRQAFVS</sequence>
<accession>C5CIV6</accession>
<protein>
    <recommendedName>
        <fullName evidence="1">ATP synthase subunit alpha</fullName>
        <ecNumber evidence="1">7.1.2.2</ecNumber>
    </recommendedName>
    <alternativeName>
        <fullName evidence="1">ATP synthase F1 sector subunit alpha</fullName>
    </alternativeName>
    <alternativeName>
        <fullName evidence="1">F-ATPase subunit alpha</fullName>
    </alternativeName>
</protein>
<dbReference type="EC" id="7.1.2.2" evidence="1"/>
<dbReference type="EMBL" id="CP001634">
    <property type="protein sequence ID" value="ACR78945.1"/>
    <property type="molecule type" value="Genomic_DNA"/>
</dbReference>
<dbReference type="RefSeq" id="WP_012744732.1">
    <property type="nucleotide sequence ID" value="NC_012785.1"/>
</dbReference>
<dbReference type="SMR" id="C5CIV6"/>
<dbReference type="STRING" id="521045.Kole_0220"/>
<dbReference type="KEGG" id="kol:Kole_0220"/>
<dbReference type="eggNOG" id="COG0056">
    <property type="taxonomic scope" value="Bacteria"/>
</dbReference>
<dbReference type="HOGENOM" id="CLU_010091_2_1_0"/>
<dbReference type="OrthoDB" id="9803053at2"/>
<dbReference type="Proteomes" id="UP000002382">
    <property type="component" value="Chromosome"/>
</dbReference>
<dbReference type="GO" id="GO:0005886">
    <property type="term" value="C:plasma membrane"/>
    <property type="evidence" value="ECO:0007669"/>
    <property type="project" value="UniProtKB-SubCell"/>
</dbReference>
<dbReference type="GO" id="GO:0045259">
    <property type="term" value="C:proton-transporting ATP synthase complex"/>
    <property type="evidence" value="ECO:0007669"/>
    <property type="project" value="UniProtKB-KW"/>
</dbReference>
<dbReference type="GO" id="GO:0043531">
    <property type="term" value="F:ADP binding"/>
    <property type="evidence" value="ECO:0007669"/>
    <property type="project" value="TreeGrafter"/>
</dbReference>
<dbReference type="GO" id="GO:0005524">
    <property type="term" value="F:ATP binding"/>
    <property type="evidence" value="ECO:0007669"/>
    <property type="project" value="UniProtKB-UniRule"/>
</dbReference>
<dbReference type="GO" id="GO:0046933">
    <property type="term" value="F:proton-transporting ATP synthase activity, rotational mechanism"/>
    <property type="evidence" value="ECO:0007669"/>
    <property type="project" value="UniProtKB-UniRule"/>
</dbReference>
<dbReference type="CDD" id="cd18113">
    <property type="entry name" value="ATP-synt_F1_alpha_C"/>
    <property type="match status" value="1"/>
</dbReference>
<dbReference type="CDD" id="cd18116">
    <property type="entry name" value="ATP-synt_F1_alpha_N"/>
    <property type="match status" value="1"/>
</dbReference>
<dbReference type="CDD" id="cd01132">
    <property type="entry name" value="F1-ATPase_alpha_CD"/>
    <property type="match status" value="1"/>
</dbReference>
<dbReference type="FunFam" id="1.20.150.20:FF:000001">
    <property type="entry name" value="ATP synthase subunit alpha"/>
    <property type="match status" value="1"/>
</dbReference>
<dbReference type="FunFam" id="2.40.30.20:FF:000001">
    <property type="entry name" value="ATP synthase subunit alpha"/>
    <property type="match status" value="1"/>
</dbReference>
<dbReference type="FunFam" id="3.40.50.300:FF:000002">
    <property type="entry name" value="ATP synthase subunit alpha"/>
    <property type="match status" value="1"/>
</dbReference>
<dbReference type="Gene3D" id="2.40.30.20">
    <property type="match status" value="1"/>
</dbReference>
<dbReference type="Gene3D" id="1.20.150.20">
    <property type="entry name" value="ATP synthase alpha/beta chain, C-terminal domain"/>
    <property type="match status" value="1"/>
</dbReference>
<dbReference type="Gene3D" id="3.40.50.300">
    <property type="entry name" value="P-loop containing nucleotide triphosphate hydrolases"/>
    <property type="match status" value="1"/>
</dbReference>
<dbReference type="HAMAP" id="MF_01346">
    <property type="entry name" value="ATP_synth_alpha_bact"/>
    <property type="match status" value="1"/>
</dbReference>
<dbReference type="InterPro" id="IPR023366">
    <property type="entry name" value="ATP_synth_asu-like_sf"/>
</dbReference>
<dbReference type="InterPro" id="IPR000793">
    <property type="entry name" value="ATP_synth_asu_C"/>
</dbReference>
<dbReference type="InterPro" id="IPR038376">
    <property type="entry name" value="ATP_synth_asu_C_sf"/>
</dbReference>
<dbReference type="InterPro" id="IPR033732">
    <property type="entry name" value="ATP_synth_F1_a_nt-bd_dom"/>
</dbReference>
<dbReference type="InterPro" id="IPR005294">
    <property type="entry name" value="ATP_synth_F1_asu"/>
</dbReference>
<dbReference type="InterPro" id="IPR020003">
    <property type="entry name" value="ATPase_a/bsu_AS"/>
</dbReference>
<dbReference type="InterPro" id="IPR004100">
    <property type="entry name" value="ATPase_F1/V1/A1_a/bsu_N"/>
</dbReference>
<dbReference type="InterPro" id="IPR036121">
    <property type="entry name" value="ATPase_F1/V1/A1_a/bsu_N_sf"/>
</dbReference>
<dbReference type="InterPro" id="IPR000194">
    <property type="entry name" value="ATPase_F1/V1/A1_a/bsu_nucl-bd"/>
</dbReference>
<dbReference type="InterPro" id="IPR027417">
    <property type="entry name" value="P-loop_NTPase"/>
</dbReference>
<dbReference type="NCBIfam" id="TIGR00962">
    <property type="entry name" value="atpA"/>
    <property type="match status" value="1"/>
</dbReference>
<dbReference type="NCBIfam" id="NF009884">
    <property type="entry name" value="PRK13343.1"/>
    <property type="match status" value="1"/>
</dbReference>
<dbReference type="PANTHER" id="PTHR48082">
    <property type="entry name" value="ATP SYNTHASE SUBUNIT ALPHA, MITOCHONDRIAL"/>
    <property type="match status" value="1"/>
</dbReference>
<dbReference type="PANTHER" id="PTHR48082:SF2">
    <property type="entry name" value="ATP SYNTHASE SUBUNIT ALPHA, MITOCHONDRIAL"/>
    <property type="match status" value="1"/>
</dbReference>
<dbReference type="Pfam" id="PF00006">
    <property type="entry name" value="ATP-synt_ab"/>
    <property type="match status" value="1"/>
</dbReference>
<dbReference type="Pfam" id="PF00306">
    <property type="entry name" value="ATP-synt_ab_C"/>
    <property type="match status" value="1"/>
</dbReference>
<dbReference type="Pfam" id="PF02874">
    <property type="entry name" value="ATP-synt_ab_N"/>
    <property type="match status" value="1"/>
</dbReference>
<dbReference type="PIRSF" id="PIRSF039088">
    <property type="entry name" value="F_ATPase_subunit_alpha"/>
    <property type="match status" value="1"/>
</dbReference>
<dbReference type="SUPFAM" id="SSF47917">
    <property type="entry name" value="C-terminal domain of alpha and beta subunits of F1 ATP synthase"/>
    <property type="match status" value="1"/>
</dbReference>
<dbReference type="SUPFAM" id="SSF50615">
    <property type="entry name" value="N-terminal domain of alpha and beta subunits of F1 ATP synthase"/>
    <property type="match status" value="1"/>
</dbReference>
<dbReference type="SUPFAM" id="SSF52540">
    <property type="entry name" value="P-loop containing nucleoside triphosphate hydrolases"/>
    <property type="match status" value="1"/>
</dbReference>
<dbReference type="PROSITE" id="PS00152">
    <property type="entry name" value="ATPASE_ALPHA_BETA"/>
    <property type="match status" value="1"/>
</dbReference>
<gene>
    <name evidence="1" type="primary">atpA</name>
    <name type="ordered locus">Kole_0220</name>
</gene>